<keyword id="KW-0963">Cytoplasm</keyword>
<keyword id="KW-0378">Hydrolase</keyword>
<keyword id="KW-0540">Nuclease</keyword>
<keyword id="KW-0690">Ribosome biogenesis</keyword>
<proteinExistence type="inferred from homology"/>
<gene>
    <name evidence="1" type="primary">yqgF</name>
    <name type="ordered locus">BUAP5A_541</name>
</gene>
<comment type="function">
    <text evidence="1">Could be a nuclease involved in processing of the 5'-end of pre-16S rRNA.</text>
</comment>
<comment type="subcellular location">
    <subcellularLocation>
        <location evidence="1">Cytoplasm</location>
    </subcellularLocation>
</comment>
<comment type="similarity">
    <text evidence="1">Belongs to the YqgF nuclease family.</text>
</comment>
<accession>B8D9X0</accession>
<feature type="chain" id="PRO_1000147465" description="Putative pre-16S rRNA nuclease">
    <location>
        <begin position="1"/>
        <end position="135"/>
    </location>
</feature>
<protein>
    <recommendedName>
        <fullName evidence="1">Putative pre-16S rRNA nuclease</fullName>
        <ecNumber evidence="1">3.1.-.-</ecNumber>
    </recommendedName>
</protein>
<sequence>MIVIAFDFGIKKIGVAVGENITKKGRPLSVLNAQNGCPNWQLVKNLIQYWQPQFIVVGLPLNINGTKQKITNKSEKFANLLKYKFNIVVKMHDERLTTVEAKSIIFKKNGFKGLKEEKIHSCAAVIILESWFNQY</sequence>
<organism>
    <name type="scientific">Buchnera aphidicola subsp. Acyrthosiphon pisum (strain 5A)</name>
    <dbReference type="NCBI Taxonomy" id="563178"/>
    <lineage>
        <taxon>Bacteria</taxon>
        <taxon>Pseudomonadati</taxon>
        <taxon>Pseudomonadota</taxon>
        <taxon>Gammaproteobacteria</taxon>
        <taxon>Enterobacterales</taxon>
        <taxon>Erwiniaceae</taxon>
        <taxon>Buchnera</taxon>
    </lineage>
</organism>
<evidence type="ECO:0000255" key="1">
    <source>
        <dbReference type="HAMAP-Rule" id="MF_00651"/>
    </source>
</evidence>
<reference key="1">
    <citation type="journal article" date="2009" name="Science">
        <title>The dynamics and time scale of ongoing genomic erosion in symbiotic bacteria.</title>
        <authorList>
            <person name="Moran N.A."/>
            <person name="McLaughlin H.J."/>
            <person name="Sorek R."/>
        </authorList>
    </citation>
    <scope>NUCLEOTIDE SEQUENCE [LARGE SCALE GENOMIC DNA]</scope>
    <source>
        <strain>5A</strain>
    </source>
</reference>
<dbReference type="EC" id="3.1.-.-" evidence="1"/>
<dbReference type="EMBL" id="CP001161">
    <property type="protein sequence ID" value="ACL30891.1"/>
    <property type="molecule type" value="Genomic_DNA"/>
</dbReference>
<dbReference type="SMR" id="B8D9X0"/>
<dbReference type="KEGG" id="bap:BUAP5A_541"/>
<dbReference type="HOGENOM" id="CLU_098240_3_0_6"/>
<dbReference type="OrthoDB" id="9796140at2"/>
<dbReference type="Proteomes" id="UP000006904">
    <property type="component" value="Chromosome"/>
</dbReference>
<dbReference type="GO" id="GO:0005829">
    <property type="term" value="C:cytosol"/>
    <property type="evidence" value="ECO:0007669"/>
    <property type="project" value="TreeGrafter"/>
</dbReference>
<dbReference type="GO" id="GO:0004518">
    <property type="term" value="F:nuclease activity"/>
    <property type="evidence" value="ECO:0007669"/>
    <property type="project" value="UniProtKB-KW"/>
</dbReference>
<dbReference type="GO" id="GO:0000967">
    <property type="term" value="P:rRNA 5'-end processing"/>
    <property type="evidence" value="ECO:0007669"/>
    <property type="project" value="UniProtKB-UniRule"/>
</dbReference>
<dbReference type="CDD" id="cd16964">
    <property type="entry name" value="YqgF"/>
    <property type="match status" value="1"/>
</dbReference>
<dbReference type="Gene3D" id="3.30.420.140">
    <property type="entry name" value="YqgF/RNase H-like domain"/>
    <property type="match status" value="1"/>
</dbReference>
<dbReference type="HAMAP" id="MF_00651">
    <property type="entry name" value="Nuclease_YqgF"/>
    <property type="match status" value="1"/>
</dbReference>
<dbReference type="InterPro" id="IPR012337">
    <property type="entry name" value="RNaseH-like_sf"/>
</dbReference>
<dbReference type="InterPro" id="IPR005227">
    <property type="entry name" value="YqgF"/>
</dbReference>
<dbReference type="InterPro" id="IPR006641">
    <property type="entry name" value="YqgF/RNaseH-like_dom"/>
</dbReference>
<dbReference type="InterPro" id="IPR037027">
    <property type="entry name" value="YqgF/RNaseH-like_dom_sf"/>
</dbReference>
<dbReference type="NCBIfam" id="TIGR00250">
    <property type="entry name" value="RNAse_H_YqgF"/>
    <property type="match status" value="1"/>
</dbReference>
<dbReference type="PANTHER" id="PTHR33317">
    <property type="entry name" value="POLYNUCLEOTIDYL TRANSFERASE, RIBONUCLEASE H-LIKE SUPERFAMILY PROTEIN"/>
    <property type="match status" value="1"/>
</dbReference>
<dbReference type="PANTHER" id="PTHR33317:SF4">
    <property type="entry name" value="POLYNUCLEOTIDYL TRANSFERASE, RIBONUCLEASE H-LIKE SUPERFAMILY PROTEIN"/>
    <property type="match status" value="1"/>
</dbReference>
<dbReference type="Pfam" id="PF03652">
    <property type="entry name" value="RuvX"/>
    <property type="match status" value="1"/>
</dbReference>
<dbReference type="SMART" id="SM00732">
    <property type="entry name" value="YqgFc"/>
    <property type="match status" value="1"/>
</dbReference>
<dbReference type="SUPFAM" id="SSF53098">
    <property type="entry name" value="Ribonuclease H-like"/>
    <property type="match status" value="1"/>
</dbReference>
<name>YQGF_BUCA5</name>